<accession>Q1CBH3</accession>
<evidence type="ECO:0000250" key="1">
    <source>
        <dbReference type="UniProtKB" id="P10906"/>
    </source>
</evidence>
<evidence type="ECO:0000255" key="2"/>
<evidence type="ECO:0000255" key="3">
    <source>
        <dbReference type="PROSITE-ProRule" id="PRU00441"/>
    </source>
</evidence>
<evidence type="ECO:0000305" key="4"/>
<feature type="chain" id="PRO_0000292689" description="sn-glycerol-3-phosphate transport system permease protein UgpE">
    <location>
        <begin position="1"/>
        <end position="281"/>
    </location>
</feature>
<feature type="transmembrane region" description="Helical" evidence="3">
    <location>
        <begin position="14"/>
        <end position="34"/>
    </location>
</feature>
<feature type="transmembrane region" description="Helical" evidence="3">
    <location>
        <begin position="85"/>
        <end position="105"/>
    </location>
</feature>
<feature type="transmembrane region" description="Helical" evidence="3">
    <location>
        <begin position="113"/>
        <end position="133"/>
    </location>
</feature>
<feature type="transmembrane region" description="Helical" evidence="3">
    <location>
        <begin position="142"/>
        <end position="162"/>
    </location>
</feature>
<feature type="transmembrane region" description="Helical" evidence="3">
    <location>
        <begin position="201"/>
        <end position="221"/>
    </location>
</feature>
<feature type="transmembrane region" description="Helical" evidence="3">
    <location>
        <begin position="247"/>
        <end position="267"/>
    </location>
</feature>
<feature type="domain" description="ABC transmembrane type-1" evidence="3">
    <location>
        <begin position="77"/>
        <end position="268"/>
    </location>
</feature>
<proteinExistence type="inferred from homology"/>
<dbReference type="EMBL" id="CP000308">
    <property type="protein sequence ID" value="ABG12199.1"/>
    <property type="molecule type" value="Genomic_DNA"/>
</dbReference>
<dbReference type="RefSeq" id="WP_002211522.1">
    <property type="nucleotide sequence ID" value="NZ_CP009906.1"/>
</dbReference>
<dbReference type="SMR" id="Q1CBH3"/>
<dbReference type="GeneID" id="57974914"/>
<dbReference type="KEGG" id="ypa:YPA_0230"/>
<dbReference type="Proteomes" id="UP000001971">
    <property type="component" value="Chromosome"/>
</dbReference>
<dbReference type="GO" id="GO:0005886">
    <property type="term" value="C:plasma membrane"/>
    <property type="evidence" value="ECO:0007669"/>
    <property type="project" value="UniProtKB-SubCell"/>
</dbReference>
<dbReference type="GO" id="GO:0055085">
    <property type="term" value="P:transmembrane transport"/>
    <property type="evidence" value="ECO:0007669"/>
    <property type="project" value="InterPro"/>
</dbReference>
<dbReference type="CDD" id="cd06261">
    <property type="entry name" value="TM_PBP2"/>
    <property type="match status" value="1"/>
</dbReference>
<dbReference type="Gene3D" id="1.10.3720.10">
    <property type="entry name" value="MetI-like"/>
    <property type="match status" value="1"/>
</dbReference>
<dbReference type="InterPro" id="IPR000515">
    <property type="entry name" value="MetI-like"/>
</dbReference>
<dbReference type="InterPro" id="IPR035906">
    <property type="entry name" value="MetI-like_sf"/>
</dbReference>
<dbReference type="NCBIfam" id="NF008210">
    <property type="entry name" value="PRK10973.1"/>
    <property type="match status" value="1"/>
</dbReference>
<dbReference type="PANTHER" id="PTHR43744">
    <property type="entry name" value="ABC TRANSPORTER PERMEASE PROTEIN MG189-RELATED-RELATED"/>
    <property type="match status" value="1"/>
</dbReference>
<dbReference type="PANTHER" id="PTHR43744:SF8">
    <property type="entry name" value="SN-GLYCEROL-3-PHOSPHATE TRANSPORT SYSTEM PERMEASE PROTEIN UGPE"/>
    <property type="match status" value="1"/>
</dbReference>
<dbReference type="Pfam" id="PF00528">
    <property type="entry name" value="BPD_transp_1"/>
    <property type="match status" value="1"/>
</dbReference>
<dbReference type="SUPFAM" id="SSF161098">
    <property type="entry name" value="MetI-like"/>
    <property type="match status" value="1"/>
</dbReference>
<dbReference type="PROSITE" id="PS50928">
    <property type="entry name" value="ABC_TM1"/>
    <property type="match status" value="1"/>
</dbReference>
<organism>
    <name type="scientific">Yersinia pestis bv. Antiqua (strain Antiqua)</name>
    <dbReference type="NCBI Taxonomy" id="360102"/>
    <lineage>
        <taxon>Bacteria</taxon>
        <taxon>Pseudomonadati</taxon>
        <taxon>Pseudomonadota</taxon>
        <taxon>Gammaproteobacteria</taxon>
        <taxon>Enterobacterales</taxon>
        <taxon>Yersiniaceae</taxon>
        <taxon>Yersinia</taxon>
    </lineage>
</organism>
<keyword id="KW-0997">Cell inner membrane</keyword>
<keyword id="KW-1003">Cell membrane</keyword>
<keyword id="KW-0472">Membrane</keyword>
<keyword id="KW-0812">Transmembrane</keyword>
<keyword id="KW-1133">Transmembrane helix</keyword>
<keyword id="KW-0813">Transport</keyword>
<name>UGPE_YERPA</name>
<gene>
    <name type="primary">ugpE</name>
    <name type="ordered locus">YPA_0230</name>
</gene>
<sequence>MIENRRGLDIFCHIMLIIGVLLILFPLYVAFVAASLDDSQVFQAPMTLIPGPHLWQNISHIWHAGVGNNSTPFGLMLLNSFVMAFAITVGKITVSILSAYAIVYFRFPLRNLFFWLIFLTLMLPVEVRIFPTIEVIANLNLLDSYTGLTLPLMASATATFLFRQFFMTLPDELLEAARIDGAGAMRFFWDIVLPLSKTNLAALFVITFIYGWNQYLWPILITSDASMGTAVAGIRSMISTSGAPTQWNQVMAAMILTLIPPVVVVLLMQRWFVRGLVDSEK</sequence>
<comment type="function">
    <text evidence="1">Part of the ABC transporter complex UgpBAEC involved in sn-glycerol-3-phosphate (G3P) import. Probably responsible for the translocation of the substrate across the membrane.</text>
</comment>
<comment type="subunit">
    <text evidence="1">The complex is composed of two ATP-binding proteins (UgpC), two transmembrane proteins (UgpA and UgpE) and a solute-binding protein (UgpB).</text>
</comment>
<comment type="subcellular location">
    <subcellularLocation>
        <location evidence="1">Cell inner membrane</location>
        <topology evidence="2">Multi-pass membrane protein</topology>
    </subcellularLocation>
</comment>
<comment type="similarity">
    <text evidence="4">Belongs to the binding-protein-dependent transport system permease family. UgpAE subfamily.</text>
</comment>
<protein>
    <recommendedName>
        <fullName evidence="1">sn-glycerol-3-phosphate transport system permease protein UgpE</fullName>
    </recommendedName>
</protein>
<reference key="1">
    <citation type="journal article" date="2006" name="J. Bacteriol.">
        <title>Complete genome sequence of Yersinia pestis strains Antiqua and Nepal516: evidence of gene reduction in an emerging pathogen.</title>
        <authorList>
            <person name="Chain P.S.G."/>
            <person name="Hu P."/>
            <person name="Malfatti S.A."/>
            <person name="Radnedge L."/>
            <person name="Larimer F."/>
            <person name="Vergez L.M."/>
            <person name="Worsham P."/>
            <person name="Chu M.C."/>
            <person name="Andersen G.L."/>
        </authorList>
    </citation>
    <scope>NUCLEOTIDE SEQUENCE [LARGE SCALE GENOMIC DNA]</scope>
    <source>
        <strain>Antiqua</strain>
    </source>
</reference>